<keyword id="KW-1003">Cell membrane</keyword>
<keyword id="KW-0325">Glycoprotein</keyword>
<keyword id="KW-0472">Membrane</keyword>
<keyword id="KW-0597">Phosphoprotein</keyword>
<keyword id="KW-1185">Reference proteome</keyword>
<keyword id="KW-0677">Repeat</keyword>
<keyword id="KW-0812">Transmembrane</keyword>
<keyword id="KW-1133">Transmembrane helix</keyword>
<keyword id="KW-0813">Transport</keyword>
<gene>
    <name evidence="2" type="primary">AQP1</name>
</gene>
<dbReference type="EMBL" id="AB011373">
    <property type="protein sequence ID" value="BAA93428.1"/>
    <property type="molecule type" value="mRNA"/>
</dbReference>
<dbReference type="RefSeq" id="NP_001003130.1">
    <property type="nucleotide sequence ID" value="NM_001003130.1"/>
</dbReference>
<dbReference type="SMR" id="Q9N2J4"/>
<dbReference type="FunCoup" id="Q9N2J4">
    <property type="interactions" value="10"/>
</dbReference>
<dbReference type="STRING" id="9615.ENSCAFP00000043920"/>
<dbReference type="GlyCosmos" id="Q9N2J4">
    <property type="glycosylation" value="1 site, No reported glycans"/>
</dbReference>
<dbReference type="SwissPalm" id="Q9N2J4"/>
<dbReference type="PaxDb" id="9612-ENSCAFP00000004614"/>
<dbReference type="Ensembl" id="ENSCAFT00000004976.5">
    <property type="protein sequence ID" value="ENSCAFP00000004614.5"/>
    <property type="gene ID" value="ENSCAFG00000003102.5"/>
</dbReference>
<dbReference type="Ensembl" id="ENSCAFT00845036363.1">
    <property type="protein sequence ID" value="ENSCAFP00845028463.1"/>
    <property type="gene ID" value="ENSCAFG00845020628.1"/>
</dbReference>
<dbReference type="GeneID" id="403732"/>
<dbReference type="KEGG" id="cfa:403732"/>
<dbReference type="CTD" id="358"/>
<dbReference type="VEuPathDB" id="HostDB:ENSCAFG00845020628"/>
<dbReference type="VGNC" id="VGNC:111341">
    <property type="gene designation" value="AQP1"/>
</dbReference>
<dbReference type="eggNOG" id="KOG0223">
    <property type="taxonomic scope" value="Eukaryota"/>
</dbReference>
<dbReference type="GeneTree" id="ENSGT00940000157015"/>
<dbReference type="HOGENOM" id="CLU_020019_3_3_1"/>
<dbReference type="InParanoid" id="Q9N2J4"/>
<dbReference type="OMA" id="FKKKMFW"/>
<dbReference type="OrthoDB" id="3222at2759"/>
<dbReference type="TreeFam" id="TF312940"/>
<dbReference type="Reactome" id="R-CFA-1237044">
    <property type="pathway name" value="Erythrocytes take up carbon dioxide and release oxygen"/>
</dbReference>
<dbReference type="Reactome" id="R-CFA-1247673">
    <property type="pathway name" value="Erythrocytes take up oxygen and release carbon dioxide"/>
</dbReference>
<dbReference type="Reactome" id="R-CFA-432040">
    <property type="pathway name" value="Vasopressin regulates renal water homeostasis via Aquaporins"/>
</dbReference>
<dbReference type="Reactome" id="R-CFA-432047">
    <property type="pathway name" value="Passive transport by Aquaporins"/>
</dbReference>
<dbReference type="Proteomes" id="UP000002254">
    <property type="component" value="Chromosome 14"/>
</dbReference>
<dbReference type="Proteomes" id="UP000694429">
    <property type="component" value="Unplaced"/>
</dbReference>
<dbReference type="Proteomes" id="UP000694542">
    <property type="component" value="Unplaced"/>
</dbReference>
<dbReference type="Proteomes" id="UP000805418">
    <property type="component" value="Chromosome 14"/>
</dbReference>
<dbReference type="Bgee" id="ENSCAFG00000003102">
    <property type="expression patterns" value="Expressed in metanephros cortex and 46 other cell types or tissues"/>
</dbReference>
<dbReference type="GO" id="GO:0170014">
    <property type="term" value="C:ankyrin-1 complex"/>
    <property type="evidence" value="ECO:0000250"/>
    <property type="project" value="UniProtKB"/>
</dbReference>
<dbReference type="GO" id="GO:0045177">
    <property type="term" value="C:apical part of cell"/>
    <property type="evidence" value="ECO:0000250"/>
    <property type="project" value="UniProtKB"/>
</dbReference>
<dbReference type="GO" id="GO:0016324">
    <property type="term" value="C:apical plasma membrane"/>
    <property type="evidence" value="ECO:0000250"/>
    <property type="project" value="UniProtKB"/>
</dbReference>
<dbReference type="GO" id="GO:0030424">
    <property type="term" value="C:axon"/>
    <property type="evidence" value="ECO:0007669"/>
    <property type="project" value="Ensembl"/>
</dbReference>
<dbReference type="GO" id="GO:0009925">
    <property type="term" value="C:basal plasma membrane"/>
    <property type="evidence" value="ECO:0000250"/>
    <property type="project" value="UniProtKB"/>
</dbReference>
<dbReference type="GO" id="GO:0016323">
    <property type="term" value="C:basolateral plasma membrane"/>
    <property type="evidence" value="ECO:0000250"/>
    <property type="project" value="UniProtKB"/>
</dbReference>
<dbReference type="GO" id="GO:0005903">
    <property type="term" value="C:brush border"/>
    <property type="evidence" value="ECO:0000250"/>
    <property type="project" value="UniProtKB"/>
</dbReference>
<dbReference type="GO" id="GO:0031526">
    <property type="term" value="C:brush border membrane"/>
    <property type="evidence" value="ECO:0000250"/>
    <property type="project" value="UniProtKB"/>
</dbReference>
<dbReference type="GO" id="GO:0005901">
    <property type="term" value="C:caveola"/>
    <property type="evidence" value="ECO:0007669"/>
    <property type="project" value="Ensembl"/>
</dbReference>
<dbReference type="GO" id="GO:0005737">
    <property type="term" value="C:cytoplasm"/>
    <property type="evidence" value="ECO:0000250"/>
    <property type="project" value="UniProtKB"/>
</dbReference>
<dbReference type="GO" id="GO:0070062">
    <property type="term" value="C:extracellular exosome"/>
    <property type="evidence" value="ECO:0007669"/>
    <property type="project" value="Ensembl"/>
</dbReference>
<dbReference type="GO" id="GO:0031965">
    <property type="term" value="C:nuclear membrane"/>
    <property type="evidence" value="ECO:0000250"/>
    <property type="project" value="UniProtKB"/>
</dbReference>
<dbReference type="GO" id="GO:0005634">
    <property type="term" value="C:nucleus"/>
    <property type="evidence" value="ECO:0000250"/>
    <property type="project" value="UniProtKB"/>
</dbReference>
<dbReference type="GO" id="GO:0005886">
    <property type="term" value="C:plasma membrane"/>
    <property type="evidence" value="ECO:0000250"/>
    <property type="project" value="UniProtKB"/>
</dbReference>
<dbReference type="GO" id="GO:0042383">
    <property type="term" value="C:sarcolemma"/>
    <property type="evidence" value="ECO:0000250"/>
    <property type="project" value="UniProtKB"/>
</dbReference>
<dbReference type="GO" id="GO:0008519">
    <property type="term" value="F:ammonium channel activity"/>
    <property type="evidence" value="ECO:0000250"/>
    <property type="project" value="UniProtKB"/>
</dbReference>
<dbReference type="GO" id="GO:0035379">
    <property type="term" value="F:carbon dioxide transmembrane transporter activity"/>
    <property type="evidence" value="ECO:0000250"/>
    <property type="project" value="UniProtKB"/>
</dbReference>
<dbReference type="GO" id="GO:0046875">
    <property type="term" value="F:ephrin receptor binding"/>
    <property type="evidence" value="ECO:0007669"/>
    <property type="project" value="Ensembl"/>
</dbReference>
<dbReference type="GO" id="GO:0015168">
    <property type="term" value="F:glycerol transmembrane transporter activity"/>
    <property type="evidence" value="ECO:0000250"/>
    <property type="project" value="UniProtKB"/>
</dbReference>
<dbReference type="GO" id="GO:0140070">
    <property type="term" value="F:hydrogen peroxide channel activity"/>
    <property type="evidence" value="ECO:0007669"/>
    <property type="project" value="Ensembl"/>
</dbReference>
<dbReference type="GO" id="GO:0042802">
    <property type="term" value="F:identical protein binding"/>
    <property type="evidence" value="ECO:0007669"/>
    <property type="project" value="Ensembl"/>
</dbReference>
<dbReference type="GO" id="GO:0005223">
    <property type="term" value="F:intracellularly cGMP-activated cation channel activity"/>
    <property type="evidence" value="ECO:0000250"/>
    <property type="project" value="UniProtKB"/>
</dbReference>
<dbReference type="GO" id="GO:0030184">
    <property type="term" value="F:nitric oxide transmembrane transporter activity"/>
    <property type="evidence" value="ECO:0000250"/>
    <property type="project" value="UniProtKB"/>
</dbReference>
<dbReference type="GO" id="GO:0005267">
    <property type="term" value="F:potassium channel activity"/>
    <property type="evidence" value="ECO:0000250"/>
    <property type="project" value="UniProtKB"/>
</dbReference>
<dbReference type="GO" id="GO:0022857">
    <property type="term" value="F:transmembrane transporter activity"/>
    <property type="evidence" value="ECO:0000250"/>
    <property type="project" value="UniProtKB"/>
</dbReference>
<dbReference type="GO" id="GO:0015250">
    <property type="term" value="F:water channel activity"/>
    <property type="evidence" value="ECO:0000250"/>
    <property type="project" value="UniProtKB"/>
</dbReference>
<dbReference type="GO" id="GO:0005372">
    <property type="term" value="F:water transmembrane transporter activity"/>
    <property type="evidence" value="ECO:0000250"/>
    <property type="project" value="UniProtKB"/>
</dbReference>
<dbReference type="GO" id="GO:0072488">
    <property type="term" value="P:ammonium transmembrane transport"/>
    <property type="evidence" value="ECO:0000250"/>
    <property type="project" value="UniProtKB"/>
</dbReference>
<dbReference type="GO" id="GO:0048593">
    <property type="term" value="P:camera-type eye morphogenesis"/>
    <property type="evidence" value="ECO:0007669"/>
    <property type="project" value="Ensembl"/>
</dbReference>
<dbReference type="GO" id="GO:0035378">
    <property type="term" value="P:carbon dioxide transmembrane transport"/>
    <property type="evidence" value="ECO:0000250"/>
    <property type="project" value="UniProtKB"/>
</dbReference>
<dbReference type="GO" id="GO:0015670">
    <property type="term" value="P:carbon dioxide transport"/>
    <property type="evidence" value="ECO:0000250"/>
    <property type="project" value="UniProtKB"/>
</dbReference>
<dbReference type="GO" id="GO:0006884">
    <property type="term" value="P:cell volume homeostasis"/>
    <property type="evidence" value="ECO:0000250"/>
    <property type="project" value="UniProtKB"/>
</dbReference>
<dbReference type="GO" id="GO:0019725">
    <property type="term" value="P:cellular homeostasis"/>
    <property type="evidence" value="ECO:0000250"/>
    <property type="project" value="UniProtKB"/>
</dbReference>
<dbReference type="GO" id="GO:0071474">
    <property type="term" value="P:cellular hyperosmotic response"/>
    <property type="evidence" value="ECO:0000250"/>
    <property type="project" value="UniProtKB"/>
</dbReference>
<dbReference type="GO" id="GO:0071320">
    <property type="term" value="P:cellular response to cAMP"/>
    <property type="evidence" value="ECO:0000250"/>
    <property type="project" value="UniProtKB"/>
</dbReference>
<dbReference type="GO" id="GO:0071280">
    <property type="term" value="P:cellular response to copper ion"/>
    <property type="evidence" value="ECO:0000250"/>
    <property type="project" value="UniProtKB"/>
</dbReference>
<dbReference type="GO" id="GO:0071549">
    <property type="term" value="P:cellular response to dexamethasone stimulus"/>
    <property type="evidence" value="ECO:0000250"/>
    <property type="project" value="UniProtKB"/>
</dbReference>
<dbReference type="GO" id="GO:0070301">
    <property type="term" value="P:cellular response to hydrogen peroxide"/>
    <property type="evidence" value="ECO:0000250"/>
    <property type="project" value="UniProtKB"/>
</dbReference>
<dbReference type="GO" id="GO:0071456">
    <property type="term" value="P:cellular response to hypoxia"/>
    <property type="evidence" value="ECO:0000250"/>
    <property type="project" value="UniProtKB"/>
</dbReference>
<dbReference type="GO" id="GO:0071260">
    <property type="term" value="P:cellular response to mechanical stimulus"/>
    <property type="evidence" value="ECO:0000250"/>
    <property type="project" value="UniProtKB"/>
</dbReference>
<dbReference type="GO" id="GO:0071288">
    <property type="term" value="P:cellular response to mercury ion"/>
    <property type="evidence" value="ECO:0000250"/>
    <property type="project" value="UniProtKB"/>
</dbReference>
<dbReference type="GO" id="GO:0071732">
    <property type="term" value="P:cellular response to nitric oxide"/>
    <property type="evidence" value="ECO:0007669"/>
    <property type="project" value="Ensembl"/>
</dbReference>
<dbReference type="GO" id="GO:0071300">
    <property type="term" value="P:cellular response to retinoic acid"/>
    <property type="evidence" value="ECO:0000250"/>
    <property type="project" value="UniProtKB"/>
</dbReference>
<dbReference type="GO" id="GO:0071472">
    <property type="term" value="P:cellular response to salt stress"/>
    <property type="evidence" value="ECO:0000250"/>
    <property type="project" value="UniProtKB"/>
</dbReference>
<dbReference type="GO" id="GO:0034644">
    <property type="term" value="P:cellular response to UV"/>
    <property type="evidence" value="ECO:0000250"/>
    <property type="project" value="UniProtKB"/>
</dbReference>
<dbReference type="GO" id="GO:0033326">
    <property type="term" value="P:cerebrospinal fluid secretion"/>
    <property type="evidence" value="ECO:0007669"/>
    <property type="project" value="Ensembl"/>
</dbReference>
<dbReference type="GO" id="GO:0019934">
    <property type="term" value="P:cGMP-mediated signaling"/>
    <property type="evidence" value="ECO:0000250"/>
    <property type="project" value="UniProtKB"/>
</dbReference>
<dbReference type="GO" id="GO:0051458">
    <property type="term" value="P:corticotropin secretion"/>
    <property type="evidence" value="ECO:0007669"/>
    <property type="project" value="Ensembl"/>
</dbReference>
<dbReference type="GO" id="GO:0050829">
    <property type="term" value="P:defense response to Gram-negative bacterium"/>
    <property type="evidence" value="ECO:0007669"/>
    <property type="project" value="Ensembl"/>
</dbReference>
<dbReference type="GO" id="GO:0051649">
    <property type="term" value="P:establishment of localization in cell"/>
    <property type="evidence" value="ECO:0007669"/>
    <property type="project" value="Ensembl"/>
</dbReference>
<dbReference type="GO" id="GO:0030950">
    <property type="term" value="P:establishment or maintenance of actin cytoskeleton polarity"/>
    <property type="evidence" value="ECO:0000250"/>
    <property type="project" value="UniProtKB"/>
</dbReference>
<dbReference type="GO" id="GO:0010761">
    <property type="term" value="P:fibroblast migration"/>
    <property type="evidence" value="ECO:0007669"/>
    <property type="project" value="Ensembl"/>
</dbReference>
<dbReference type="GO" id="GO:0003094">
    <property type="term" value="P:glomerular filtration"/>
    <property type="evidence" value="ECO:0007669"/>
    <property type="project" value="Ensembl"/>
</dbReference>
<dbReference type="GO" id="GO:0015793">
    <property type="term" value="P:glycerol transmembrane transport"/>
    <property type="evidence" value="ECO:0000250"/>
    <property type="project" value="UniProtKB"/>
</dbReference>
<dbReference type="GO" id="GO:0006972">
    <property type="term" value="P:hyperosmotic response"/>
    <property type="evidence" value="ECO:0000318"/>
    <property type="project" value="GO_Central"/>
</dbReference>
<dbReference type="GO" id="GO:0009992">
    <property type="term" value="P:intracellular water homeostasis"/>
    <property type="evidence" value="ECO:0000250"/>
    <property type="project" value="UniProtKB"/>
</dbReference>
<dbReference type="GO" id="GO:0021670">
    <property type="term" value="P:lateral ventricle development"/>
    <property type="evidence" value="ECO:0000250"/>
    <property type="project" value="UniProtKB"/>
</dbReference>
<dbReference type="GO" id="GO:0044241">
    <property type="term" value="P:lipid digestion"/>
    <property type="evidence" value="ECO:0007669"/>
    <property type="project" value="Ensembl"/>
</dbReference>
<dbReference type="GO" id="GO:0072220">
    <property type="term" value="P:metanephric descending thin limb development"/>
    <property type="evidence" value="ECO:0007669"/>
    <property type="project" value="Ensembl"/>
</dbReference>
<dbReference type="GO" id="GO:0072239">
    <property type="term" value="P:metanephric glomerulus vasculature development"/>
    <property type="evidence" value="ECO:0007669"/>
    <property type="project" value="Ensembl"/>
</dbReference>
<dbReference type="GO" id="GO:0072232">
    <property type="term" value="P:metanephric proximal convoluted tubule segment 2 development"/>
    <property type="evidence" value="ECO:0007669"/>
    <property type="project" value="Ensembl"/>
</dbReference>
<dbReference type="GO" id="GO:0072230">
    <property type="term" value="P:metanephric proximal straight tubule development"/>
    <property type="evidence" value="ECO:0007669"/>
    <property type="project" value="Ensembl"/>
</dbReference>
<dbReference type="GO" id="GO:0043066">
    <property type="term" value="P:negative regulation of apoptotic process"/>
    <property type="evidence" value="ECO:0000250"/>
    <property type="project" value="UniProtKB"/>
</dbReference>
<dbReference type="GO" id="GO:0030185">
    <property type="term" value="P:nitric oxide transport"/>
    <property type="evidence" value="ECO:0000250"/>
    <property type="project" value="UniProtKB"/>
</dbReference>
<dbReference type="GO" id="GO:0042476">
    <property type="term" value="P:odontogenesis"/>
    <property type="evidence" value="ECO:0007669"/>
    <property type="project" value="Ensembl"/>
</dbReference>
<dbReference type="GO" id="GO:0030157">
    <property type="term" value="P:pancreatic juice secretion"/>
    <property type="evidence" value="ECO:0007669"/>
    <property type="project" value="Ensembl"/>
</dbReference>
<dbReference type="GO" id="GO:0045766">
    <property type="term" value="P:positive regulation of angiogenesis"/>
    <property type="evidence" value="ECO:0000250"/>
    <property type="project" value="UniProtKB"/>
</dbReference>
<dbReference type="GO" id="GO:0010763">
    <property type="term" value="P:positive regulation of fibroblast migration"/>
    <property type="evidence" value="ECO:0007669"/>
    <property type="project" value="Ensembl"/>
</dbReference>
<dbReference type="GO" id="GO:0048146">
    <property type="term" value="P:positive regulation of fibroblast proliferation"/>
    <property type="evidence" value="ECO:0000250"/>
    <property type="project" value="UniProtKB"/>
</dbReference>
<dbReference type="GO" id="GO:0046878">
    <property type="term" value="P:positive regulation of saliva secretion"/>
    <property type="evidence" value="ECO:0000250"/>
    <property type="project" value="UniProtKB"/>
</dbReference>
<dbReference type="GO" id="GO:0070295">
    <property type="term" value="P:renal water absorption"/>
    <property type="evidence" value="ECO:0007669"/>
    <property type="project" value="Ensembl"/>
</dbReference>
<dbReference type="GO" id="GO:0003097">
    <property type="term" value="P:renal water transport"/>
    <property type="evidence" value="ECO:0000250"/>
    <property type="project" value="UniProtKB"/>
</dbReference>
<dbReference type="GO" id="GO:0033363">
    <property type="term" value="P:secretory granule organization"/>
    <property type="evidence" value="ECO:0007669"/>
    <property type="project" value="Ensembl"/>
</dbReference>
<dbReference type="GO" id="GO:0019233">
    <property type="term" value="P:sensory perception of pain"/>
    <property type="evidence" value="ECO:0007669"/>
    <property type="project" value="Ensembl"/>
</dbReference>
<dbReference type="GO" id="GO:0035377">
    <property type="term" value="P:transepithelial water transport"/>
    <property type="evidence" value="ECO:0000250"/>
    <property type="project" value="UniProtKB"/>
</dbReference>
<dbReference type="GO" id="GO:0006833">
    <property type="term" value="P:water transport"/>
    <property type="evidence" value="ECO:0000250"/>
    <property type="project" value="UniProtKB"/>
</dbReference>
<dbReference type="GO" id="GO:0042060">
    <property type="term" value="P:wound healing"/>
    <property type="evidence" value="ECO:0007669"/>
    <property type="project" value="Ensembl"/>
</dbReference>
<dbReference type="CDD" id="cd00333">
    <property type="entry name" value="MIP"/>
    <property type="match status" value="1"/>
</dbReference>
<dbReference type="FunFam" id="1.20.1080.10:FF:000012">
    <property type="entry name" value="Aquaporin-1"/>
    <property type="match status" value="1"/>
</dbReference>
<dbReference type="Gene3D" id="1.20.1080.10">
    <property type="entry name" value="Glycerol uptake facilitator protein"/>
    <property type="match status" value="1"/>
</dbReference>
<dbReference type="InterPro" id="IPR023271">
    <property type="entry name" value="Aquaporin-like"/>
</dbReference>
<dbReference type="InterPro" id="IPR023274">
    <property type="entry name" value="Aquaporin_1"/>
</dbReference>
<dbReference type="InterPro" id="IPR034294">
    <property type="entry name" value="Aquaporin_transptr"/>
</dbReference>
<dbReference type="InterPro" id="IPR000425">
    <property type="entry name" value="MIP"/>
</dbReference>
<dbReference type="InterPro" id="IPR022357">
    <property type="entry name" value="MIP_CS"/>
</dbReference>
<dbReference type="NCBIfam" id="TIGR00861">
    <property type="entry name" value="MIP"/>
    <property type="match status" value="1"/>
</dbReference>
<dbReference type="PANTHER" id="PTHR19139">
    <property type="entry name" value="AQUAPORIN TRANSPORTER"/>
    <property type="match status" value="1"/>
</dbReference>
<dbReference type="PANTHER" id="PTHR19139:SF161">
    <property type="entry name" value="AQUAPORIN-1"/>
    <property type="match status" value="1"/>
</dbReference>
<dbReference type="Pfam" id="PF00230">
    <property type="entry name" value="MIP"/>
    <property type="match status" value="1"/>
</dbReference>
<dbReference type="PRINTS" id="PR02013">
    <property type="entry name" value="AQUAPORIN1"/>
</dbReference>
<dbReference type="PRINTS" id="PR00783">
    <property type="entry name" value="MINTRINSICP"/>
</dbReference>
<dbReference type="SUPFAM" id="SSF81338">
    <property type="entry name" value="Aquaporin-like"/>
    <property type="match status" value="1"/>
</dbReference>
<dbReference type="PROSITE" id="PS00221">
    <property type="entry name" value="MIP"/>
    <property type="match status" value="1"/>
</dbReference>
<reference key="1">
    <citation type="journal article" date="2000" name="Biochim. Biophys. Acta">
        <title>Molecular cloning and expression of aquaporin 1 (AQP1) in dog kidney and erythroblasts.</title>
        <authorList>
            <person name="Higa K."/>
            <person name="Ochiai H."/>
            <person name="Fujise H."/>
        </authorList>
    </citation>
    <scope>NUCLEOTIDE SEQUENCE [MRNA]</scope>
    <scope>FUNCTION</scope>
    <scope>SUBCELLULAR LOCATION</scope>
    <source>
        <strain>Shiba</strain>
        <tissue>Kidney</tissue>
    </source>
</reference>
<sequence>MASEFKKKLFWRAVVAEFLAMILFVFISIGSALGFNYPVRNNQTAGAAQDNVKVSLAFGLSIATLAQSVGHISGAHLNPAVTLGLLLSCQISILRAVMYIIAQCVGAIVATAILSGITSSLPDNSLGRNELAPGVNSGQGLGIEIIGTLQLVLCVLATTDRRRRDLGGSGPLAIGLSVALGHLLAIDYTGCGINPARSFGSSVITHNFKDHWIFWVGPFIGGALAVLIYDFILAPRSSDLTDRVKVWTSGQVEEYELDGDDINSRVEMKPK</sequence>
<accession>Q9N2J4</accession>
<name>AQP1_CANLF</name>
<proteinExistence type="evidence at transcript level"/>
<comment type="function">
    <text evidence="2 5">Forms a water channel that facilitates the transport of water across cell membranes, playing a crucial role in water homeostasis in various tissues (PubMed:10675514). Could also be permeable to small solutes including hydrogen peroxide, glycerol and gases such as amonnia (NH3), nitric oxide (NO) and carbon dioxide (CO2). Recruited to the ankyrin-1 complex, a multiprotein complex of the erythrocyte membrane, it could be part of a CO2 metabolon, linking facilitated diffusion of CO2 across the membrane, anion exchange of Cl(-)/HCO3(-) and interconversion of dissolved CO2 and carbonic acid in the cytosol. In vitro, it shows non-selective gated cation channel activity and may be permeable to cations like K(+) and Na(+) in vivo (By similarity).</text>
</comment>
<comment type="catalytic activity">
    <reaction evidence="2">
        <text>H2O(in) = H2O(out)</text>
        <dbReference type="Rhea" id="RHEA:29667"/>
        <dbReference type="ChEBI" id="CHEBI:15377"/>
    </reaction>
</comment>
<comment type="catalytic activity">
    <reaction evidence="2">
        <text>nitric oxide(out) = nitric oxide(in)</text>
        <dbReference type="Rhea" id="RHEA:74895"/>
        <dbReference type="ChEBI" id="CHEBI:16480"/>
    </reaction>
</comment>
<comment type="catalytic activity">
    <reaction evidence="2">
        <text>CO2(out) = CO2(in)</text>
        <dbReference type="Rhea" id="RHEA:74891"/>
        <dbReference type="ChEBI" id="CHEBI:16526"/>
    </reaction>
</comment>
<comment type="catalytic activity">
    <reaction evidence="2">
        <text>glycerol(in) = glycerol(out)</text>
        <dbReference type="Rhea" id="RHEA:29675"/>
        <dbReference type="ChEBI" id="CHEBI:17754"/>
    </reaction>
</comment>
<comment type="catalytic activity">
    <reaction evidence="2">
        <text>H2O2(out) = H2O2(in)</text>
        <dbReference type="Rhea" id="RHEA:74375"/>
        <dbReference type="ChEBI" id="CHEBI:16240"/>
    </reaction>
</comment>
<comment type="catalytic activity">
    <reaction evidence="2">
        <text>K(+)(in) = K(+)(out)</text>
        <dbReference type="Rhea" id="RHEA:29463"/>
        <dbReference type="ChEBI" id="CHEBI:29103"/>
    </reaction>
</comment>
<comment type="catalytic activity">
    <reaction evidence="2">
        <text>Na(+)(in) = Na(+)(out)</text>
        <dbReference type="Rhea" id="RHEA:34963"/>
        <dbReference type="ChEBI" id="CHEBI:29101"/>
    </reaction>
</comment>
<comment type="subunit">
    <text evidence="1 2 3">Homotetramer; each monomer provides an independent water pore. Component of the ankyrin-1 complex in the erythrocyte, composed of ANK1, RHCE, RHAG, SLC4A1, EPB42, GYPA, GYPB and AQP1 (By similarity). Interacts with EPHB2; involved in endolymph production in the inner ear (By similarity). Identified in a complex with STOM. Interacts (via the N-terminal) with ANK1 (via ANK 1-5 repeats). Interacts (via the C-terminal) with EPB42 (By similarity).</text>
</comment>
<comment type="subcellular location">
    <subcellularLocation>
        <location evidence="5">Cell membrane</location>
        <topology evidence="2">Multi-pass membrane protein</topology>
    </subcellularLocation>
</comment>
<comment type="domain">
    <text evidence="2">Aquaporins contain two tandem repeats each containing three membrane-spanning domains and a pore-forming loop with the signature motif Asn-Pro-Ala (NPA).</text>
</comment>
<comment type="similarity">
    <text evidence="6">Belongs to the MIP/aquaporin (TC 1.A.8) family.</text>
</comment>
<feature type="chain" id="PRO_0000063919" description="Aquaporin-1">
    <location>
        <begin position="1"/>
        <end position="271"/>
    </location>
</feature>
<feature type="topological domain" description="Cytoplasmic" evidence="6">
    <location>
        <begin position="1"/>
        <end position="11"/>
    </location>
</feature>
<feature type="transmembrane region" description="Helical; Name=Helix 1" evidence="2">
    <location>
        <begin position="12"/>
        <end position="29"/>
    </location>
</feature>
<feature type="topological domain" description="Extracellular" evidence="6">
    <location>
        <begin position="30"/>
        <end position="48"/>
    </location>
</feature>
<feature type="transmembrane region" description="Helical; Name=Helix 2" evidence="2">
    <location>
        <begin position="49"/>
        <end position="67"/>
    </location>
</feature>
<feature type="topological domain" description="Cytoplasmic" evidence="6">
    <location>
        <begin position="68"/>
        <end position="70"/>
    </location>
</feature>
<feature type="intramembrane region" evidence="2">
    <location>
        <begin position="71"/>
        <end position="84"/>
    </location>
</feature>
<feature type="topological domain" description="Cytoplasmic" evidence="6">
    <location>
        <begin position="85"/>
        <end position="92"/>
    </location>
</feature>
<feature type="transmembrane region" description="Helical; Name=Helix 3" evidence="2">
    <location>
        <begin position="93"/>
        <end position="111"/>
    </location>
</feature>
<feature type="topological domain" description="Extracellular" evidence="6">
    <location>
        <begin position="112"/>
        <end position="135"/>
    </location>
</feature>
<feature type="transmembrane region" description="Helical; Name=Helix 4" evidence="2">
    <location>
        <begin position="136"/>
        <end position="155"/>
    </location>
</feature>
<feature type="topological domain" description="Cytoplasmic" evidence="6">
    <location>
        <begin position="156"/>
        <end position="165"/>
    </location>
</feature>
<feature type="transmembrane region" description="Helical; Name=Helix 5" evidence="2">
    <location>
        <begin position="166"/>
        <end position="183"/>
    </location>
</feature>
<feature type="topological domain" description="Extracellular" evidence="6">
    <location>
        <begin position="184"/>
        <end position="188"/>
    </location>
</feature>
<feature type="intramembrane region" evidence="2">
    <location>
        <begin position="189"/>
        <end position="201"/>
    </location>
</feature>
<feature type="topological domain" description="Extracellular" evidence="6">
    <location>
        <begin position="202"/>
        <end position="208"/>
    </location>
</feature>
<feature type="transmembrane region" description="Helical; Name=Helix 6" evidence="2">
    <location>
        <begin position="209"/>
        <end position="226"/>
    </location>
</feature>
<feature type="topological domain" description="Cytoplasmic" evidence="6">
    <location>
        <begin position="227"/>
        <end position="271"/>
    </location>
</feature>
<feature type="short sequence motif" description="NPA 1" evidence="2">
    <location>
        <begin position="78"/>
        <end position="80"/>
    </location>
</feature>
<feature type="short sequence motif" description="NPA 2" evidence="2">
    <location>
        <begin position="194"/>
        <end position="196"/>
    </location>
</feature>
<feature type="modified residue" description="Phosphoserine" evidence="3">
    <location>
        <position position="249"/>
    </location>
</feature>
<feature type="modified residue" description="Phosphotyrosine" evidence="3">
    <location>
        <position position="255"/>
    </location>
</feature>
<feature type="modified residue" description="Phosphoserine" evidence="3">
    <location>
        <position position="264"/>
    </location>
</feature>
<feature type="glycosylation site" description="N-linked (GlcNAc...) asparagine" evidence="4">
    <location>
        <position position="42"/>
    </location>
</feature>
<protein>
    <recommendedName>
        <fullName evidence="2">Aquaporin-1</fullName>
        <shortName>AQP-1</shortName>
    </recommendedName>
    <alternativeName>
        <fullName>Aquaporin-CHIP</fullName>
    </alternativeName>
</protein>
<organism>
    <name type="scientific">Canis lupus familiaris</name>
    <name type="common">Dog</name>
    <name type="synonym">Canis familiaris</name>
    <dbReference type="NCBI Taxonomy" id="9615"/>
    <lineage>
        <taxon>Eukaryota</taxon>
        <taxon>Metazoa</taxon>
        <taxon>Chordata</taxon>
        <taxon>Craniata</taxon>
        <taxon>Vertebrata</taxon>
        <taxon>Euteleostomi</taxon>
        <taxon>Mammalia</taxon>
        <taxon>Eutheria</taxon>
        <taxon>Laurasiatheria</taxon>
        <taxon>Carnivora</taxon>
        <taxon>Caniformia</taxon>
        <taxon>Canidae</taxon>
        <taxon>Canis</taxon>
    </lineage>
</organism>
<evidence type="ECO:0000250" key="1"/>
<evidence type="ECO:0000250" key="2">
    <source>
        <dbReference type="UniProtKB" id="P29972"/>
    </source>
</evidence>
<evidence type="ECO:0000250" key="3">
    <source>
        <dbReference type="UniProtKB" id="Q02013"/>
    </source>
</evidence>
<evidence type="ECO:0000255" key="4"/>
<evidence type="ECO:0000269" key="5">
    <source>
    </source>
</evidence>
<evidence type="ECO:0000305" key="6"/>